<organism>
    <name type="scientific">Mus musculus</name>
    <name type="common">Mouse</name>
    <dbReference type="NCBI Taxonomy" id="10090"/>
    <lineage>
        <taxon>Eukaryota</taxon>
        <taxon>Metazoa</taxon>
        <taxon>Chordata</taxon>
        <taxon>Craniata</taxon>
        <taxon>Vertebrata</taxon>
        <taxon>Euteleostomi</taxon>
        <taxon>Mammalia</taxon>
        <taxon>Eutheria</taxon>
        <taxon>Euarchontoglires</taxon>
        <taxon>Glires</taxon>
        <taxon>Rodentia</taxon>
        <taxon>Myomorpha</taxon>
        <taxon>Muroidea</taxon>
        <taxon>Muridae</taxon>
        <taxon>Murinae</taxon>
        <taxon>Mus</taxon>
        <taxon>Mus</taxon>
    </lineage>
</organism>
<sequence length="535" mass="60518">MAPTIQTQAQREDGHRPNSHRTLPERSGVVCRVKYCNSLPDIPFDPKFITYPFDQNRFVQYKATSLEKQHKHDLLTEPDLGVTIDLINPDTYRIDPNVLLDPADEKLLEEEIQAPTSSKRSQQHAKVVPWMRKTEYISTEFNRYGISNEKPEVKIGVSVKQQFTEEEIYKDRDSQITAIEKTFEDAQKSISQHYSKPRVTPVEVMPVFPDFKMWINPCAQVIFDSDPAPKDTSGAAALEMMSQAMIRGMMDEEGNQFVAYFLPVEETLKKRKRDQEEEMDYAPDDVYDYKIAREYNWNVKNKASKGYEENYFFIFREGDGVYYNELETRVRLSKRRAKAGVQSGTNALLVVKHRDMNEKELEAQEARKAQLENHEPEEEEEEEMEAEEKEAGGSDEEQEKGSSSEKEGSEDEHSGSESDREEGDRDEASDKSGSGEDESSEDEARAARDKEEIFGSDADSEDDADSDDEDRGQAHRGSDNDSDSGSDGGGQRSRSQSRSRSRSASPFPSGSEHSAQEDGSEAAASDSSEADSDSD</sequence>
<name>PAF1_MOUSE</name>
<feature type="chain" id="PRO_0000326401" description="RNA polymerase II-associated factor 1 homolog">
    <location>
        <begin position="1"/>
        <end position="535"/>
    </location>
</feature>
<feature type="region of interest" description="Disordered" evidence="4">
    <location>
        <begin position="1"/>
        <end position="23"/>
    </location>
</feature>
<feature type="region of interest" description="Disordered" evidence="4">
    <location>
        <begin position="361"/>
        <end position="535"/>
    </location>
</feature>
<feature type="coiled-coil region" evidence="3">
    <location>
        <begin position="352"/>
        <end position="400"/>
    </location>
</feature>
<feature type="compositionally biased region" description="Basic and acidic residues" evidence="4">
    <location>
        <begin position="361"/>
        <end position="374"/>
    </location>
</feature>
<feature type="compositionally biased region" description="Acidic residues" evidence="4">
    <location>
        <begin position="375"/>
        <end position="398"/>
    </location>
</feature>
<feature type="compositionally biased region" description="Basic and acidic residues" evidence="4">
    <location>
        <begin position="399"/>
        <end position="434"/>
    </location>
</feature>
<feature type="compositionally biased region" description="Basic and acidic residues" evidence="4">
    <location>
        <begin position="442"/>
        <end position="453"/>
    </location>
</feature>
<feature type="compositionally biased region" description="Acidic residues" evidence="4">
    <location>
        <begin position="458"/>
        <end position="470"/>
    </location>
</feature>
<feature type="compositionally biased region" description="Low complexity" evidence="4">
    <location>
        <begin position="502"/>
        <end position="511"/>
    </location>
</feature>
<feature type="modified residue" description="Phosphoserine" evidence="2">
    <location>
        <position position="117"/>
    </location>
</feature>
<feature type="modified residue" description="Phosphoserine" evidence="8">
    <location>
        <position position="456"/>
    </location>
</feature>
<feature type="cross-link" description="Glycyl lysine isopeptide (Lys-Gly) (interchain with G-Cter in SUMO2)" evidence="2">
    <location>
        <position position="133"/>
    </location>
</feature>
<feature type="cross-link" description="Glycyl lysine isopeptide (Lys-Gly) (interchain with G-Cter in SUMO2)" evidence="2">
    <location>
        <position position="154"/>
    </location>
</feature>
<feature type="sequence conflict" description="In Ref. 1; BAA95098." evidence="7" ref="1">
    <original>P</original>
    <variation>L</variation>
    <location>
        <position position="227"/>
    </location>
</feature>
<feature type="sequence conflict" description="In Ref. 1; BAE22315." evidence="7" ref="1">
    <original>R</original>
    <variation>Q</variation>
    <location>
        <position position="336"/>
    </location>
</feature>
<feature type="sequence conflict" description="In Ref. 1; BAE22315." evidence="7" ref="1">
    <location>
        <position position="505"/>
    </location>
</feature>
<proteinExistence type="evidence at protein level"/>
<accession>Q8K2T8</accession>
<accession>Q3UY97</accession>
<accession>Q9CS63</accession>
<accession>Q9JJ99</accession>
<gene>
    <name type="primary">Paf1</name>
</gene>
<keyword id="KW-0175">Coiled coil</keyword>
<keyword id="KW-1017">Isopeptide bond</keyword>
<keyword id="KW-0539">Nucleus</keyword>
<keyword id="KW-0597">Phosphoprotein</keyword>
<keyword id="KW-1185">Reference proteome</keyword>
<keyword id="KW-0804">Transcription</keyword>
<keyword id="KW-0805">Transcription regulation</keyword>
<keyword id="KW-0832">Ubl conjugation</keyword>
<keyword id="KW-0879">Wnt signaling pathway</keyword>
<evidence type="ECO:0000250" key="1"/>
<evidence type="ECO:0000250" key="2">
    <source>
        <dbReference type="UniProtKB" id="Q8N7H5"/>
    </source>
</evidence>
<evidence type="ECO:0000255" key="3"/>
<evidence type="ECO:0000256" key="4">
    <source>
        <dbReference type="SAM" id="MobiDB-lite"/>
    </source>
</evidence>
<evidence type="ECO:0000269" key="5">
    <source>
    </source>
</evidence>
<evidence type="ECO:0000269" key="6">
    <source>
    </source>
</evidence>
<evidence type="ECO:0000305" key="7"/>
<evidence type="ECO:0007744" key="8">
    <source>
    </source>
</evidence>
<protein>
    <recommendedName>
        <fullName>RNA polymerase II-associated factor 1 homolog</fullName>
    </recommendedName>
</protein>
<comment type="function">
    <text evidence="1 5">Component of the PAF1 complex (PAF1C) which has multiple functions during transcription by RNA polymerase II and is implicated in regulation of development and maintenance of embryonic stem cell pluripotency. PAF1C associates with RNA polymerase II through interaction with POLR2A CTD non-phosphorylated and 'Ser-2'- and 'Ser-5'-phosphorylated forms and is involved in transcriptional elongation, acting both independently and synergistically with TCEA1 and in cooperation with the DSIF complex and HTATSF1. PAF1C is required for transcription of Hox and Wnt target genes. PAF1C is involved in hematopoiesis and stimulates transcriptional activity of KMT2A/MLL1. PAF1C is involved in histone modifications such as ubiquitination of histone H2B and methylation on histone H3 'Lys-4' (H3K4me3). PAF1C recruits the RNF20/40 E3 ubiquitin-protein ligase complex and the E2 enzyme UBE2A or UBE2B to chromatin which mediate monoubiquitination of 'Lys-120' of histone H2B (H2BK120ub1); UB2A/B-mediated H2B ubiquitination is proposed to be coupled to transcription. PAF1C is involved in mRNA 3' end formation probably through association with cleavage and poly(A) factors. Connects PAF1C with the RNF20/40 E3 ubiquitin-protein ligase complex. Involved in polyadenylation of mRNA precursors (By similarity).</text>
</comment>
<comment type="subunit">
    <text evidence="2 6">Component of the PAF1 complex, which consists of CDC73, PAF1, LEO1, CTR9, RTF1 and SKIC8. The PAF1 complex interacts with PHF5A (PubMed:27749823). Interacts with POLR2A, TCEA1, SKIC3, KMT2A/MLL1, SUPT5H, RNF20 and RNF40. Interacts with UBE2E1 (By similarity).</text>
</comment>
<comment type="subcellular location">
    <subcellularLocation>
        <location>Nucleus</location>
    </subcellularLocation>
    <text evidence="1">Punctuate distribution throughout the nucleus except in nucleoli and the perinuclear chromatin.</text>
</comment>
<comment type="similarity">
    <text evidence="7">Belongs to the PAF1 family.</text>
</comment>
<reference key="1">
    <citation type="submission" date="2000-04" db="EMBL/GenBank/DDBJ databases">
        <title>Isolation of full-length cDNA clones from mouse brain cDNA library made by oligo-capping method.</title>
        <authorList>
            <person name="Osada N."/>
            <person name="Kusuda J."/>
            <person name="Tanuma R."/>
            <person name="Ito A."/>
            <person name="Hirata M."/>
            <person name="Sugano S."/>
            <person name="Hashimoto K."/>
        </authorList>
    </citation>
    <scope>NUCLEOTIDE SEQUENCE [LARGE SCALE MRNA]</scope>
    <source>
        <strain>C57BL/6J</strain>
        <tissue>Brain</tissue>
    </source>
</reference>
<reference key="2">
    <citation type="journal article" date="2005" name="Science">
        <title>The transcriptional landscape of the mammalian genome.</title>
        <authorList>
            <person name="Carninci P."/>
            <person name="Kasukawa T."/>
            <person name="Katayama S."/>
            <person name="Gough J."/>
            <person name="Frith M.C."/>
            <person name="Maeda N."/>
            <person name="Oyama R."/>
            <person name="Ravasi T."/>
            <person name="Lenhard B."/>
            <person name="Wells C."/>
            <person name="Kodzius R."/>
            <person name="Shimokawa K."/>
            <person name="Bajic V.B."/>
            <person name="Brenner S.E."/>
            <person name="Batalov S."/>
            <person name="Forrest A.R."/>
            <person name="Zavolan M."/>
            <person name="Davis M.J."/>
            <person name="Wilming L.G."/>
            <person name="Aidinis V."/>
            <person name="Allen J.E."/>
            <person name="Ambesi-Impiombato A."/>
            <person name="Apweiler R."/>
            <person name="Aturaliya R.N."/>
            <person name="Bailey T.L."/>
            <person name="Bansal M."/>
            <person name="Baxter L."/>
            <person name="Beisel K.W."/>
            <person name="Bersano T."/>
            <person name="Bono H."/>
            <person name="Chalk A.M."/>
            <person name="Chiu K.P."/>
            <person name="Choudhary V."/>
            <person name="Christoffels A."/>
            <person name="Clutterbuck D.R."/>
            <person name="Crowe M.L."/>
            <person name="Dalla E."/>
            <person name="Dalrymple B.P."/>
            <person name="de Bono B."/>
            <person name="Della Gatta G."/>
            <person name="di Bernardo D."/>
            <person name="Down T."/>
            <person name="Engstrom P."/>
            <person name="Fagiolini M."/>
            <person name="Faulkner G."/>
            <person name="Fletcher C.F."/>
            <person name="Fukushima T."/>
            <person name="Furuno M."/>
            <person name="Futaki S."/>
            <person name="Gariboldi M."/>
            <person name="Georgii-Hemming P."/>
            <person name="Gingeras T.R."/>
            <person name="Gojobori T."/>
            <person name="Green R.E."/>
            <person name="Gustincich S."/>
            <person name="Harbers M."/>
            <person name="Hayashi Y."/>
            <person name="Hensch T.K."/>
            <person name="Hirokawa N."/>
            <person name="Hill D."/>
            <person name="Huminiecki L."/>
            <person name="Iacono M."/>
            <person name="Ikeo K."/>
            <person name="Iwama A."/>
            <person name="Ishikawa T."/>
            <person name="Jakt M."/>
            <person name="Kanapin A."/>
            <person name="Katoh M."/>
            <person name="Kawasawa Y."/>
            <person name="Kelso J."/>
            <person name="Kitamura H."/>
            <person name="Kitano H."/>
            <person name="Kollias G."/>
            <person name="Krishnan S.P."/>
            <person name="Kruger A."/>
            <person name="Kummerfeld S.K."/>
            <person name="Kurochkin I.V."/>
            <person name="Lareau L.F."/>
            <person name="Lazarevic D."/>
            <person name="Lipovich L."/>
            <person name="Liu J."/>
            <person name="Liuni S."/>
            <person name="McWilliam S."/>
            <person name="Madan Babu M."/>
            <person name="Madera M."/>
            <person name="Marchionni L."/>
            <person name="Matsuda H."/>
            <person name="Matsuzawa S."/>
            <person name="Miki H."/>
            <person name="Mignone F."/>
            <person name="Miyake S."/>
            <person name="Morris K."/>
            <person name="Mottagui-Tabar S."/>
            <person name="Mulder N."/>
            <person name="Nakano N."/>
            <person name="Nakauchi H."/>
            <person name="Ng P."/>
            <person name="Nilsson R."/>
            <person name="Nishiguchi S."/>
            <person name="Nishikawa S."/>
            <person name="Nori F."/>
            <person name="Ohara O."/>
            <person name="Okazaki Y."/>
            <person name="Orlando V."/>
            <person name="Pang K.C."/>
            <person name="Pavan W.J."/>
            <person name="Pavesi G."/>
            <person name="Pesole G."/>
            <person name="Petrovsky N."/>
            <person name="Piazza S."/>
            <person name="Reed J."/>
            <person name="Reid J.F."/>
            <person name="Ring B.Z."/>
            <person name="Ringwald M."/>
            <person name="Rost B."/>
            <person name="Ruan Y."/>
            <person name="Salzberg S.L."/>
            <person name="Sandelin A."/>
            <person name="Schneider C."/>
            <person name="Schoenbach C."/>
            <person name="Sekiguchi K."/>
            <person name="Semple C.A."/>
            <person name="Seno S."/>
            <person name="Sessa L."/>
            <person name="Sheng Y."/>
            <person name="Shibata Y."/>
            <person name="Shimada H."/>
            <person name="Shimada K."/>
            <person name="Silva D."/>
            <person name="Sinclair B."/>
            <person name="Sperling S."/>
            <person name="Stupka E."/>
            <person name="Sugiura K."/>
            <person name="Sultana R."/>
            <person name="Takenaka Y."/>
            <person name="Taki K."/>
            <person name="Tammoja K."/>
            <person name="Tan S.L."/>
            <person name="Tang S."/>
            <person name="Taylor M.S."/>
            <person name="Tegner J."/>
            <person name="Teichmann S.A."/>
            <person name="Ueda H.R."/>
            <person name="van Nimwegen E."/>
            <person name="Verardo R."/>
            <person name="Wei C.L."/>
            <person name="Yagi K."/>
            <person name="Yamanishi H."/>
            <person name="Zabarovsky E."/>
            <person name="Zhu S."/>
            <person name="Zimmer A."/>
            <person name="Hide W."/>
            <person name="Bult C."/>
            <person name="Grimmond S.M."/>
            <person name="Teasdale R.D."/>
            <person name="Liu E.T."/>
            <person name="Brusic V."/>
            <person name="Quackenbush J."/>
            <person name="Wahlestedt C."/>
            <person name="Mattick J.S."/>
            <person name="Hume D.A."/>
            <person name="Kai C."/>
            <person name="Sasaki D."/>
            <person name="Tomaru Y."/>
            <person name="Fukuda S."/>
            <person name="Kanamori-Katayama M."/>
            <person name="Suzuki M."/>
            <person name="Aoki J."/>
            <person name="Arakawa T."/>
            <person name="Iida J."/>
            <person name="Imamura K."/>
            <person name="Itoh M."/>
            <person name="Kato T."/>
            <person name="Kawaji H."/>
            <person name="Kawagashira N."/>
            <person name="Kawashima T."/>
            <person name="Kojima M."/>
            <person name="Kondo S."/>
            <person name="Konno H."/>
            <person name="Nakano K."/>
            <person name="Ninomiya N."/>
            <person name="Nishio T."/>
            <person name="Okada M."/>
            <person name="Plessy C."/>
            <person name="Shibata K."/>
            <person name="Shiraki T."/>
            <person name="Suzuki S."/>
            <person name="Tagami M."/>
            <person name="Waki K."/>
            <person name="Watahiki A."/>
            <person name="Okamura-Oho Y."/>
            <person name="Suzuki H."/>
            <person name="Kawai J."/>
            <person name="Hayashizaki Y."/>
        </authorList>
    </citation>
    <scope>NUCLEOTIDE SEQUENCE [LARGE SCALE MRNA]</scope>
    <source>
        <strain>C57BL/6J</strain>
        <tissue>Embryo</tissue>
    </source>
</reference>
<reference key="3">
    <citation type="journal article" date="2004" name="Genome Res.">
        <title>The status, quality, and expansion of the NIH full-length cDNA project: the Mammalian Gene Collection (MGC).</title>
        <authorList>
            <consortium name="The MGC Project Team"/>
        </authorList>
    </citation>
    <scope>NUCLEOTIDE SEQUENCE [LARGE SCALE MRNA]</scope>
    <source>
        <strain>C57BL/6J</strain>
        <strain>Czech II</strain>
        <tissue>Brain</tissue>
        <tissue>Mammary tumor</tissue>
    </source>
</reference>
<reference key="4">
    <citation type="journal article" date="2009" name="Cell Stem Cell">
        <title>A genome-scale RNAi screen for Oct4 modulators defines a role of the Paf1 complex for embryonic stem cell identity.</title>
        <authorList>
            <person name="Ding L."/>
            <person name="Paszkowski-Rogacz M."/>
            <person name="Nitzsche A."/>
            <person name="Slabicki M.M."/>
            <person name="Heninger A.K."/>
            <person name="de Vries I."/>
            <person name="Kittler R."/>
            <person name="Junqueira M."/>
            <person name="Shevchenko A."/>
            <person name="Schulz H."/>
            <person name="Hubner N."/>
            <person name="Doss M.X."/>
            <person name="Sachinidis A."/>
            <person name="Hescheler J."/>
            <person name="Iacone R."/>
            <person name="Anastassiadis K."/>
            <person name="Stewart A.F."/>
            <person name="Pisabarro M.T."/>
            <person name="Caldarelli A."/>
            <person name="Poser I."/>
            <person name="Theis M."/>
            <person name="Buchholz F."/>
        </authorList>
    </citation>
    <scope>FUNCTION</scope>
</reference>
<reference key="5">
    <citation type="journal article" date="2010" name="Cell">
        <title>A tissue-specific atlas of mouse protein phosphorylation and expression.</title>
        <authorList>
            <person name="Huttlin E.L."/>
            <person name="Jedrychowski M.P."/>
            <person name="Elias J.E."/>
            <person name="Goswami T."/>
            <person name="Rad R."/>
            <person name="Beausoleil S.A."/>
            <person name="Villen J."/>
            <person name="Haas W."/>
            <person name="Sowa M.E."/>
            <person name="Gygi S.P."/>
        </authorList>
    </citation>
    <scope>PHOSPHORYLATION [LARGE SCALE ANALYSIS] AT SER-456</scope>
    <scope>IDENTIFICATION BY MASS SPECTROMETRY [LARGE SCALE ANALYSIS]</scope>
    <source>
        <tissue>Spleen</tissue>
        <tissue>Testis</tissue>
    </source>
</reference>
<reference key="6">
    <citation type="journal article" date="2016" name="Nat. Cell Biol.">
        <title>Regulation of transcriptional elongation in pluripotency and cell differentiation by the PHD-finger protein Phf5a.</title>
        <authorList>
            <person name="Strikoudis A."/>
            <person name="Lazaris C."/>
            <person name="Trimarchi T."/>
            <person name="Galvao Neto A.L."/>
            <person name="Yang Y."/>
            <person name="Ntziachristos P."/>
            <person name="Rothbart S."/>
            <person name="Buckley S."/>
            <person name="Dolgalev I."/>
            <person name="Stadtfeld M."/>
            <person name="Strahl B.D."/>
            <person name="Dynlacht B.D."/>
            <person name="Tsirigos A."/>
            <person name="Aifantis I."/>
        </authorList>
    </citation>
    <scope>IDENTIFICATION BY MASS SPECTROMETRY</scope>
    <scope>SUBUNIT</scope>
</reference>
<dbReference type="EMBL" id="AB041615">
    <property type="protein sequence ID" value="BAA95098.1"/>
    <property type="molecule type" value="mRNA"/>
</dbReference>
<dbReference type="EMBL" id="AK017762">
    <property type="protein sequence ID" value="BAB30913.1"/>
    <property type="molecule type" value="mRNA"/>
</dbReference>
<dbReference type="EMBL" id="AK134857">
    <property type="protein sequence ID" value="BAE22315.1"/>
    <property type="molecule type" value="mRNA"/>
</dbReference>
<dbReference type="EMBL" id="AK148538">
    <property type="protein sequence ID" value="BAE28608.1"/>
    <property type="molecule type" value="mRNA"/>
</dbReference>
<dbReference type="EMBL" id="BC029843">
    <property type="protein sequence ID" value="AAH29843.1"/>
    <property type="molecule type" value="mRNA"/>
</dbReference>
<dbReference type="EMBL" id="BC083337">
    <property type="protein sequence ID" value="AAH83337.1"/>
    <property type="molecule type" value="mRNA"/>
</dbReference>
<dbReference type="CCDS" id="CCDS21043.1"/>
<dbReference type="RefSeq" id="NP_062331.2">
    <property type="nucleotide sequence ID" value="NM_019458.3"/>
</dbReference>
<dbReference type="RefSeq" id="XP_036009151.1">
    <property type="nucleotide sequence ID" value="XM_036153258.1"/>
</dbReference>
<dbReference type="SMR" id="Q8K2T8"/>
<dbReference type="BioGRID" id="207692">
    <property type="interactions" value="12"/>
</dbReference>
<dbReference type="FunCoup" id="Q8K2T8">
    <property type="interactions" value="4966"/>
</dbReference>
<dbReference type="IntAct" id="Q8K2T8">
    <property type="interactions" value="9"/>
</dbReference>
<dbReference type="MINT" id="Q8K2T8"/>
<dbReference type="STRING" id="10090.ENSMUSP00000003529"/>
<dbReference type="GlyGen" id="Q8K2T8">
    <property type="glycosylation" value="2 sites, 1 N-linked glycan (1 site), 1 O-linked glycan (1 site)"/>
</dbReference>
<dbReference type="iPTMnet" id="Q8K2T8"/>
<dbReference type="PhosphoSitePlus" id="Q8K2T8"/>
<dbReference type="SwissPalm" id="Q8K2T8"/>
<dbReference type="PaxDb" id="10090-ENSMUSP00000003529"/>
<dbReference type="PeptideAtlas" id="Q8K2T8"/>
<dbReference type="ProteomicsDB" id="294149"/>
<dbReference type="Pumba" id="Q8K2T8"/>
<dbReference type="Antibodypedia" id="30305">
    <property type="antibodies" value="229 antibodies from 27 providers"/>
</dbReference>
<dbReference type="DNASU" id="54624"/>
<dbReference type="Ensembl" id="ENSMUST00000003529.9">
    <property type="protein sequence ID" value="ENSMUSP00000003529.9"/>
    <property type="gene ID" value="ENSMUSG00000003437.15"/>
</dbReference>
<dbReference type="GeneID" id="54624"/>
<dbReference type="KEGG" id="mmu:54624"/>
<dbReference type="UCSC" id="uc009fyu.1">
    <property type="organism name" value="mouse"/>
</dbReference>
<dbReference type="AGR" id="MGI:1923988"/>
<dbReference type="CTD" id="54623"/>
<dbReference type="MGI" id="MGI:1923988">
    <property type="gene designation" value="Paf1"/>
</dbReference>
<dbReference type="VEuPathDB" id="HostDB:ENSMUSG00000003437"/>
<dbReference type="eggNOG" id="KOG2478">
    <property type="taxonomic scope" value="Eukaryota"/>
</dbReference>
<dbReference type="GeneTree" id="ENSGT00390000001474"/>
<dbReference type="HOGENOM" id="CLU_021991_2_0_1"/>
<dbReference type="InParanoid" id="Q8K2T8"/>
<dbReference type="OMA" id="LVCRIKY"/>
<dbReference type="OrthoDB" id="10260285at2759"/>
<dbReference type="PhylomeDB" id="Q8K2T8"/>
<dbReference type="TreeFam" id="TF313642"/>
<dbReference type="Reactome" id="R-MMU-112382">
    <property type="pathway name" value="Formation of RNA Pol II elongation complex"/>
</dbReference>
<dbReference type="Reactome" id="R-MMU-674695">
    <property type="pathway name" value="RNA Polymerase II Pre-transcription Events"/>
</dbReference>
<dbReference type="Reactome" id="R-MMU-75955">
    <property type="pathway name" value="RNA Polymerase II Transcription Elongation"/>
</dbReference>
<dbReference type="Reactome" id="R-MMU-8866654">
    <property type="pathway name" value="E3 ubiquitin ligases ubiquitinate target proteins"/>
</dbReference>
<dbReference type="BioGRID-ORCS" id="54624">
    <property type="hits" value="26 hits in 81 CRISPR screens"/>
</dbReference>
<dbReference type="PRO" id="PR:Q8K2T8"/>
<dbReference type="Proteomes" id="UP000000589">
    <property type="component" value="Chromosome 7"/>
</dbReference>
<dbReference type="RNAct" id="Q8K2T8">
    <property type="molecule type" value="protein"/>
</dbReference>
<dbReference type="Bgee" id="ENSMUSG00000003437">
    <property type="expression patterns" value="Expressed in ear vesicle and 262 other cell types or tissues"/>
</dbReference>
<dbReference type="GO" id="GO:0016593">
    <property type="term" value="C:Cdc73/Paf1 complex"/>
    <property type="evidence" value="ECO:0000353"/>
    <property type="project" value="UniProtKB"/>
</dbReference>
<dbReference type="GO" id="GO:0005737">
    <property type="term" value="C:cytoplasm"/>
    <property type="evidence" value="ECO:0007669"/>
    <property type="project" value="Ensembl"/>
</dbReference>
<dbReference type="GO" id="GO:0001650">
    <property type="term" value="C:fibrillar center"/>
    <property type="evidence" value="ECO:0007669"/>
    <property type="project" value="Ensembl"/>
</dbReference>
<dbReference type="GO" id="GO:0016020">
    <property type="term" value="C:membrane"/>
    <property type="evidence" value="ECO:0007669"/>
    <property type="project" value="Ensembl"/>
</dbReference>
<dbReference type="GO" id="GO:0003682">
    <property type="term" value="F:chromatin binding"/>
    <property type="evidence" value="ECO:0000314"/>
    <property type="project" value="MGI"/>
</dbReference>
<dbReference type="GO" id="GO:0000993">
    <property type="term" value="F:RNA polymerase II complex binding"/>
    <property type="evidence" value="ECO:0000250"/>
    <property type="project" value="UniProtKB"/>
</dbReference>
<dbReference type="GO" id="GO:0071222">
    <property type="term" value="P:cellular response to lipopolysaccharide"/>
    <property type="evidence" value="ECO:0000314"/>
    <property type="project" value="UniProtKB"/>
</dbReference>
<dbReference type="GO" id="GO:0001711">
    <property type="term" value="P:endodermal cell fate commitment"/>
    <property type="evidence" value="ECO:0000315"/>
    <property type="project" value="UniProtKB"/>
</dbReference>
<dbReference type="GO" id="GO:0031124">
    <property type="term" value="P:mRNA 3'-end processing"/>
    <property type="evidence" value="ECO:0000250"/>
    <property type="project" value="UniProtKB"/>
</dbReference>
<dbReference type="GO" id="GO:0045638">
    <property type="term" value="P:negative regulation of myeloid cell differentiation"/>
    <property type="evidence" value="ECO:0000250"/>
    <property type="project" value="UniProtKB"/>
</dbReference>
<dbReference type="GO" id="GO:0000122">
    <property type="term" value="P:negative regulation of transcription by RNA polymerase II"/>
    <property type="evidence" value="ECO:0000315"/>
    <property type="project" value="UniProtKB"/>
</dbReference>
<dbReference type="GO" id="GO:1902808">
    <property type="term" value="P:positive regulation of cell cycle G1/S phase transition"/>
    <property type="evidence" value="ECO:0000250"/>
    <property type="project" value="UniProtKB"/>
</dbReference>
<dbReference type="GO" id="GO:0045944">
    <property type="term" value="P:positive regulation of transcription by RNA polymerase II"/>
    <property type="evidence" value="ECO:0007669"/>
    <property type="project" value="Ensembl"/>
</dbReference>
<dbReference type="GO" id="GO:0034504">
    <property type="term" value="P:protein localization to nucleus"/>
    <property type="evidence" value="ECO:0007669"/>
    <property type="project" value="Ensembl"/>
</dbReference>
<dbReference type="GO" id="GO:0019827">
    <property type="term" value="P:stem cell population maintenance"/>
    <property type="evidence" value="ECO:0000315"/>
    <property type="project" value="UniProtKB"/>
</dbReference>
<dbReference type="GO" id="GO:0006368">
    <property type="term" value="P:transcription elongation by RNA polymerase II"/>
    <property type="evidence" value="ECO:0000250"/>
    <property type="project" value="UniProtKB"/>
</dbReference>
<dbReference type="GO" id="GO:0016055">
    <property type="term" value="P:Wnt signaling pathway"/>
    <property type="evidence" value="ECO:0007669"/>
    <property type="project" value="UniProtKB-KW"/>
</dbReference>
<dbReference type="InterPro" id="IPR007133">
    <property type="entry name" value="RNA_pol_II-assoc_Paf1"/>
</dbReference>
<dbReference type="PANTHER" id="PTHR23188">
    <property type="entry name" value="RNA POLYMERASE II-ASSOCIATED FACTOR 1 HOMOLOG"/>
    <property type="match status" value="1"/>
</dbReference>
<dbReference type="PANTHER" id="PTHR23188:SF12">
    <property type="entry name" value="RNA POLYMERASE II-ASSOCIATED FACTOR 1 HOMOLOG"/>
    <property type="match status" value="1"/>
</dbReference>
<dbReference type="Pfam" id="PF03985">
    <property type="entry name" value="Paf1"/>
    <property type="match status" value="1"/>
</dbReference>